<accession>B0Z4S5</accession>
<dbReference type="EC" id="7.1.1.-" evidence="1"/>
<dbReference type="EMBL" id="EU262887">
    <property type="protein sequence ID" value="ABW98753.1"/>
    <property type="molecule type" value="Genomic_DNA"/>
</dbReference>
<dbReference type="RefSeq" id="YP_001687186.1">
    <property type="nucleotide sequence ID" value="NC_010358.2"/>
</dbReference>
<dbReference type="SMR" id="B0Z4S5"/>
<dbReference type="GeneID" id="5951896"/>
<dbReference type="GO" id="GO:0009535">
    <property type="term" value="C:chloroplast thylakoid membrane"/>
    <property type="evidence" value="ECO:0007669"/>
    <property type="project" value="UniProtKB-SubCell"/>
</dbReference>
<dbReference type="GO" id="GO:0008137">
    <property type="term" value="F:NADH dehydrogenase (ubiquinone) activity"/>
    <property type="evidence" value="ECO:0007669"/>
    <property type="project" value="InterPro"/>
</dbReference>
<dbReference type="GO" id="GO:0048039">
    <property type="term" value="F:ubiquinone binding"/>
    <property type="evidence" value="ECO:0007669"/>
    <property type="project" value="TreeGrafter"/>
</dbReference>
<dbReference type="GO" id="GO:0042773">
    <property type="term" value="P:ATP synthesis coupled electron transport"/>
    <property type="evidence" value="ECO:0007669"/>
    <property type="project" value="InterPro"/>
</dbReference>
<dbReference type="GO" id="GO:0015990">
    <property type="term" value="P:electron transport coupled proton transport"/>
    <property type="evidence" value="ECO:0007669"/>
    <property type="project" value="TreeGrafter"/>
</dbReference>
<dbReference type="HAMAP" id="MF_00491">
    <property type="entry name" value="NDH1_NuoM"/>
    <property type="match status" value="1"/>
</dbReference>
<dbReference type="InterPro" id="IPR022997">
    <property type="entry name" value="NADH_Q_OxRdtase_chain4"/>
</dbReference>
<dbReference type="InterPro" id="IPR010227">
    <property type="entry name" value="NADH_Q_OxRdtase_chainM/4"/>
</dbReference>
<dbReference type="InterPro" id="IPR003918">
    <property type="entry name" value="NADH_UbQ_OxRdtase"/>
</dbReference>
<dbReference type="InterPro" id="IPR001750">
    <property type="entry name" value="ND/Mrp_TM"/>
</dbReference>
<dbReference type="NCBIfam" id="TIGR01972">
    <property type="entry name" value="NDH_I_M"/>
    <property type="match status" value="1"/>
</dbReference>
<dbReference type="PANTHER" id="PTHR43507:SF21">
    <property type="entry name" value="NAD(P)H-QUINONE OXIDOREDUCTASE CHAIN 4, CHLOROPLASTIC"/>
    <property type="match status" value="1"/>
</dbReference>
<dbReference type="PANTHER" id="PTHR43507">
    <property type="entry name" value="NADH-UBIQUINONE OXIDOREDUCTASE CHAIN 4"/>
    <property type="match status" value="1"/>
</dbReference>
<dbReference type="Pfam" id="PF00361">
    <property type="entry name" value="Proton_antipo_M"/>
    <property type="match status" value="1"/>
</dbReference>
<dbReference type="PRINTS" id="PR01437">
    <property type="entry name" value="NUOXDRDTASE4"/>
</dbReference>
<protein>
    <recommendedName>
        <fullName evidence="1">NAD(P)H-quinone oxidoreductase chain 4, chloroplastic</fullName>
        <ecNumber evidence="1">7.1.1.-</ecNumber>
    </recommendedName>
    <alternativeName>
        <fullName evidence="1">NAD(P)H dehydrogenase, chain 4</fullName>
    </alternativeName>
    <alternativeName>
        <fullName evidence="1">NADH-plastoquinone oxidoreductase chain 4</fullName>
    </alternativeName>
</protein>
<reference key="1">
    <citation type="journal article" date="2008" name="Nucleic Acids Res.">
        <title>The complete nucleotide sequences of the five genetically distinct plastid genomes of Oenothera, subsection Oenothera: I. Sequence evaluation and plastome evolution.</title>
        <authorList>
            <person name="Greiner S."/>
            <person name="Wang X."/>
            <person name="Rauwolf U."/>
            <person name="Silber M.V."/>
            <person name="Mayer K."/>
            <person name="Meurer J."/>
            <person name="Haberer G."/>
            <person name="Herrmann R.G."/>
        </authorList>
    </citation>
    <scope>NUCLEOTIDE SEQUENCE [LARGE SCALE GENOMIC DNA]</scope>
    <source>
        <strain>cv. Douthat 1</strain>
    </source>
</reference>
<gene>
    <name evidence="1" type="primary">ndhD</name>
</gene>
<organism>
    <name type="scientific">Oenothera argillicola</name>
    <name type="common">Appalachian evening primrose</name>
    <dbReference type="NCBI Taxonomy" id="3940"/>
    <lineage>
        <taxon>Eukaryota</taxon>
        <taxon>Viridiplantae</taxon>
        <taxon>Streptophyta</taxon>
        <taxon>Embryophyta</taxon>
        <taxon>Tracheophyta</taxon>
        <taxon>Spermatophyta</taxon>
        <taxon>Magnoliopsida</taxon>
        <taxon>eudicotyledons</taxon>
        <taxon>Gunneridae</taxon>
        <taxon>Pentapetalae</taxon>
        <taxon>rosids</taxon>
        <taxon>malvids</taxon>
        <taxon>Myrtales</taxon>
        <taxon>Onagraceae</taxon>
        <taxon>Onagroideae</taxon>
        <taxon>Onagreae</taxon>
        <taxon>Oenothera</taxon>
    </lineage>
</organism>
<feature type="chain" id="PRO_0000343296" description="NAD(P)H-quinone oxidoreductase chain 4, chloroplastic">
    <location>
        <begin position="1"/>
        <end position="516"/>
    </location>
</feature>
<feature type="transmembrane region" description="Helical" evidence="1">
    <location>
        <begin position="4"/>
        <end position="24"/>
    </location>
</feature>
<feature type="transmembrane region" description="Helical" evidence="1">
    <location>
        <begin position="37"/>
        <end position="57"/>
    </location>
</feature>
<feature type="transmembrane region" description="Helical" evidence="1">
    <location>
        <begin position="87"/>
        <end position="107"/>
    </location>
</feature>
<feature type="transmembrane region" description="Helical" evidence="1">
    <location>
        <begin position="111"/>
        <end position="131"/>
    </location>
</feature>
<feature type="transmembrane region" description="Helical" evidence="1">
    <location>
        <begin position="134"/>
        <end position="154"/>
    </location>
</feature>
<feature type="transmembrane region" description="Helical" evidence="1">
    <location>
        <begin position="167"/>
        <end position="187"/>
    </location>
</feature>
<feature type="transmembrane region" description="Helical" evidence="1">
    <location>
        <begin position="208"/>
        <end position="228"/>
    </location>
</feature>
<feature type="transmembrane region" description="Helical" evidence="1">
    <location>
        <begin position="242"/>
        <end position="262"/>
    </location>
</feature>
<feature type="transmembrane region" description="Helical" evidence="1">
    <location>
        <begin position="272"/>
        <end position="292"/>
    </location>
</feature>
<feature type="transmembrane region" description="Helical" evidence="1">
    <location>
        <begin position="305"/>
        <end position="325"/>
    </location>
</feature>
<feature type="transmembrane region" description="Helical" evidence="1">
    <location>
        <begin position="330"/>
        <end position="350"/>
    </location>
</feature>
<feature type="transmembrane region" description="Helical" evidence="1">
    <location>
        <begin position="386"/>
        <end position="406"/>
    </location>
</feature>
<feature type="transmembrane region" description="Helical" evidence="1">
    <location>
        <begin position="416"/>
        <end position="436"/>
    </location>
</feature>
<feature type="transmembrane region" description="Helical" evidence="1">
    <location>
        <begin position="462"/>
        <end position="482"/>
    </location>
</feature>
<sequence length="516" mass="57904">MNSFPWLTIIVVFPILTGSLIFLLPHRGNKVMKWYTLCICILELLLTTYTFCYHFQLDDPLTQLTENYKWIHFFDFYWRLGIDGLSIGPILLTGFITTLATLAAWPVTRDAQLFHFLMLAMYSGQIGSFSSRDLLLFFLMWEFELIPVYLLLSMWGGKKRLYSATKFILYTAGGSIFLLIGVLGIGLYGSNEPTLNFETLANQSYPVALEVIFYVGFLIAFAVKLPIIPLHTWLPDTHGEAHYSTCMLLAGILLKMGAYGLVRINMELLPHAHCLFSPGLIIVGAIQIIYAASTSPGQLNLKKRIAYSSISHMGFIIIGIGSLSDTGLNGAILQIISHGFIGAALFFLAGTSYDRIRLLYLDEMGGMAIPLPKLFTMLSILSMSSLALPGLSGFVAELLVFFGIITSQKYLLMPKILIAFLMAIGMILTPIYSLSMLRQMFYGYKLFNVPNYYFFDSGPRELFVSISLLLPIIGIGIYPDFVLSLSVEKVEAIISHFFFFDSFQEKRINGKRILLV</sequence>
<comment type="catalytic activity">
    <reaction evidence="1">
        <text>a plastoquinone + NADH + (n+1) H(+)(in) = a plastoquinol + NAD(+) + n H(+)(out)</text>
        <dbReference type="Rhea" id="RHEA:42608"/>
        <dbReference type="Rhea" id="RHEA-COMP:9561"/>
        <dbReference type="Rhea" id="RHEA-COMP:9562"/>
        <dbReference type="ChEBI" id="CHEBI:15378"/>
        <dbReference type="ChEBI" id="CHEBI:17757"/>
        <dbReference type="ChEBI" id="CHEBI:57540"/>
        <dbReference type="ChEBI" id="CHEBI:57945"/>
        <dbReference type="ChEBI" id="CHEBI:62192"/>
    </reaction>
</comment>
<comment type="catalytic activity">
    <reaction evidence="1">
        <text>a plastoquinone + NADPH + (n+1) H(+)(in) = a plastoquinol + NADP(+) + n H(+)(out)</text>
        <dbReference type="Rhea" id="RHEA:42612"/>
        <dbReference type="Rhea" id="RHEA-COMP:9561"/>
        <dbReference type="Rhea" id="RHEA-COMP:9562"/>
        <dbReference type="ChEBI" id="CHEBI:15378"/>
        <dbReference type="ChEBI" id="CHEBI:17757"/>
        <dbReference type="ChEBI" id="CHEBI:57783"/>
        <dbReference type="ChEBI" id="CHEBI:58349"/>
        <dbReference type="ChEBI" id="CHEBI:62192"/>
    </reaction>
</comment>
<comment type="subcellular location">
    <subcellularLocation>
        <location evidence="1">Plastid</location>
        <location evidence="1">Chloroplast thylakoid membrane</location>
        <topology evidence="1">Multi-pass membrane protein</topology>
    </subcellularLocation>
</comment>
<comment type="similarity">
    <text evidence="1">Belongs to the complex I subunit 4 family.</text>
</comment>
<keyword id="KW-0150">Chloroplast</keyword>
<keyword id="KW-0472">Membrane</keyword>
<keyword id="KW-0520">NAD</keyword>
<keyword id="KW-0521">NADP</keyword>
<keyword id="KW-0934">Plastid</keyword>
<keyword id="KW-0618">Plastoquinone</keyword>
<keyword id="KW-0874">Quinone</keyword>
<keyword id="KW-0793">Thylakoid</keyword>
<keyword id="KW-1278">Translocase</keyword>
<keyword id="KW-0812">Transmembrane</keyword>
<keyword id="KW-1133">Transmembrane helix</keyword>
<evidence type="ECO:0000255" key="1">
    <source>
        <dbReference type="HAMAP-Rule" id="MF_00491"/>
    </source>
</evidence>
<geneLocation type="chloroplast"/>
<proteinExistence type="inferred from homology"/>
<name>NU4C_OENAR</name>